<proteinExistence type="inferred from homology"/>
<sequence length="136" mass="15339">MLQPKRTKFRKMHKGRNRGLAQGTDVSFGTFGLKAVGRGRLTARQIEAARRAMTRAVKRQGKIWIRVFPDKPITEKPLEVRMGKGKGNVEYWVALIQPGKVLYEMDGVPEEVAREAFKLAAAKLPIKTTFVTKTVM</sequence>
<feature type="chain" id="PRO_1000067681" description="Large ribosomal subunit protein uL16">
    <location>
        <begin position="1"/>
        <end position="136"/>
    </location>
</feature>
<organism>
    <name type="scientific">Serratia proteamaculans (strain 568)</name>
    <dbReference type="NCBI Taxonomy" id="399741"/>
    <lineage>
        <taxon>Bacteria</taxon>
        <taxon>Pseudomonadati</taxon>
        <taxon>Pseudomonadota</taxon>
        <taxon>Gammaproteobacteria</taxon>
        <taxon>Enterobacterales</taxon>
        <taxon>Yersiniaceae</taxon>
        <taxon>Serratia</taxon>
    </lineage>
</organism>
<protein>
    <recommendedName>
        <fullName evidence="1">Large ribosomal subunit protein uL16</fullName>
    </recommendedName>
    <alternativeName>
        <fullName evidence="2">50S ribosomal protein L16</fullName>
    </alternativeName>
</protein>
<gene>
    <name evidence="1" type="primary">rplP</name>
    <name type="ordered locus">Spro_4537</name>
</gene>
<evidence type="ECO:0000255" key="1">
    <source>
        <dbReference type="HAMAP-Rule" id="MF_01342"/>
    </source>
</evidence>
<evidence type="ECO:0000305" key="2"/>
<name>RL16_SERP5</name>
<dbReference type="EMBL" id="CP000826">
    <property type="protein sequence ID" value="ABV43630.1"/>
    <property type="molecule type" value="Genomic_DNA"/>
</dbReference>
<dbReference type="SMR" id="A8GKJ0"/>
<dbReference type="STRING" id="399741.Spro_4537"/>
<dbReference type="KEGG" id="spe:Spro_4537"/>
<dbReference type="eggNOG" id="COG0197">
    <property type="taxonomic scope" value="Bacteria"/>
</dbReference>
<dbReference type="HOGENOM" id="CLU_078858_2_1_6"/>
<dbReference type="OrthoDB" id="9802589at2"/>
<dbReference type="GO" id="GO:0022625">
    <property type="term" value="C:cytosolic large ribosomal subunit"/>
    <property type="evidence" value="ECO:0007669"/>
    <property type="project" value="TreeGrafter"/>
</dbReference>
<dbReference type="GO" id="GO:0019843">
    <property type="term" value="F:rRNA binding"/>
    <property type="evidence" value="ECO:0007669"/>
    <property type="project" value="UniProtKB-UniRule"/>
</dbReference>
<dbReference type="GO" id="GO:0003735">
    <property type="term" value="F:structural constituent of ribosome"/>
    <property type="evidence" value="ECO:0007669"/>
    <property type="project" value="InterPro"/>
</dbReference>
<dbReference type="GO" id="GO:0000049">
    <property type="term" value="F:tRNA binding"/>
    <property type="evidence" value="ECO:0007669"/>
    <property type="project" value="UniProtKB-KW"/>
</dbReference>
<dbReference type="GO" id="GO:0006412">
    <property type="term" value="P:translation"/>
    <property type="evidence" value="ECO:0007669"/>
    <property type="project" value="UniProtKB-UniRule"/>
</dbReference>
<dbReference type="CDD" id="cd01433">
    <property type="entry name" value="Ribosomal_L16_L10e"/>
    <property type="match status" value="1"/>
</dbReference>
<dbReference type="FunFam" id="3.90.1170.10:FF:000001">
    <property type="entry name" value="50S ribosomal protein L16"/>
    <property type="match status" value="1"/>
</dbReference>
<dbReference type="Gene3D" id="3.90.1170.10">
    <property type="entry name" value="Ribosomal protein L10e/L16"/>
    <property type="match status" value="1"/>
</dbReference>
<dbReference type="HAMAP" id="MF_01342">
    <property type="entry name" value="Ribosomal_uL16"/>
    <property type="match status" value="1"/>
</dbReference>
<dbReference type="InterPro" id="IPR047873">
    <property type="entry name" value="Ribosomal_uL16"/>
</dbReference>
<dbReference type="InterPro" id="IPR000114">
    <property type="entry name" value="Ribosomal_uL16_bact-type"/>
</dbReference>
<dbReference type="InterPro" id="IPR020798">
    <property type="entry name" value="Ribosomal_uL16_CS"/>
</dbReference>
<dbReference type="InterPro" id="IPR016180">
    <property type="entry name" value="Ribosomal_uL16_dom"/>
</dbReference>
<dbReference type="InterPro" id="IPR036920">
    <property type="entry name" value="Ribosomal_uL16_sf"/>
</dbReference>
<dbReference type="NCBIfam" id="TIGR01164">
    <property type="entry name" value="rplP_bact"/>
    <property type="match status" value="1"/>
</dbReference>
<dbReference type="PANTHER" id="PTHR12220">
    <property type="entry name" value="50S/60S RIBOSOMAL PROTEIN L16"/>
    <property type="match status" value="1"/>
</dbReference>
<dbReference type="PANTHER" id="PTHR12220:SF13">
    <property type="entry name" value="LARGE RIBOSOMAL SUBUNIT PROTEIN UL16M"/>
    <property type="match status" value="1"/>
</dbReference>
<dbReference type="Pfam" id="PF00252">
    <property type="entry name" value="Ribosomal_L16"/>
    <property type="match status" value="1"/>
</dbReference>
<dbReference type="PRINTS" id="PR00060">
    <property type="entry name" value="RIBOSOMALL16"/>
</dbReference>
<dbReference type="SUPFAM" id="SSF54686">
    <property type="entry name" value="Ribosomal protein L16p/L10e"/>
    <property type="match status" value="1"/>
</dbReference>
<dbReference type="PROSITE" id="PS00586">
    <property type="entry name" value="RIBOSOMAL_L16_1"/>
    <property type="match status" value="1"/>
</dbReference>
<dbReference type="PROSITE" id="PS00701">
    <property type="entry name" value="RIBOSOMAL_L16_2"/>
    <property type="match status" value="1"/>
</dbReference>
<keyword id="KW-0687">Ribonucleoprotein</keyword>
<keyword id="KW-0689">Ribosomal protein</keyword>
<keyword id="KW-0694">RNA-binding</keyword>
<keyword id="KW-0699">rRNA-binding</keyword>
<keyword id="KW-0820">tRNA-binding</keyword>
<comment type="function">
    <text evidence="1">Binds 23S rRNA and is also seen to make contacts with the A and possibly P site tRNAs.</text>
</comment>
<comment type="subunit">
    <text evidence="1">Part of the 50S ribosomal subunit.</text>
</comment>
<comment type="similarity">
    <text evidence="1">Belongs to the universal ribosomal protein uL16 family.</text>
</comment>
<reference key="1">
    <citation type="submission" date="2007-09" db="EMBL/GenBank/DDBJ databases">
        <title>Complete sequence of chromosome of Serratia proteamaculans 568.</title>
        <authorList>
            <consortium name="US DOE Joint Genome Institute"/>
            <person name="Copeland A."/>
            <person name="Lucas S."/>
            <person name="Lapidus A."/>
            <person name="Barry K."/>
            <person name="Glavina del Rio T."/>
            <person name="Dalin E."/>
            <person name="Tice H."/>
            <person name="Pitluck S."/>
            <person name="Chain P."/>
            <person name="Malfatti S."/>
            <person name="Shin M."/>
            <person name="Vergez L."/>
            <person name="Schmutz J."/>
            <person name="Larimer F."/>
            <person name="Land M."/>
            <person name="Hauser L."/>
            <person name="Kyrpides N."/>
            <person name="Kim E."/>
            <person name="Taghavi S."/>
            <person name="Newman L."/>
            <person name="Vangronsveld J."/>
            <person name="van der Lelie D."/>
            <person name="Richardson P."/>
        </authorList>
    </citation>
    <scope>NUCLEOTIDE SEQUENCE [LARGE SCALE GENOMIC DNA]</scope>
    <source>
        <strain>568</strain>
    </source>
</reference>
<accession>A8GKJ0</accession>